<gene>
    <name evidence="1 6" type="primary">SLC38A8</name>
</gene>
<accession>A6NNN8</accession>
<evidence type="ECO:0000250" key="1">
    <source>
        <dbReference type="UniProtKB" id="Q5HZH7"/>
    </source>
</evidence>
<evidence type="ECO:0000255" key="2"/>
<evidence type="ECO:0000269" key="3">
    <source>
    </source>
</evidence>
<evidence type="ECO:0000269" key="4">
    <source>
    </source>
</evidence>
<evidence type="ECO:0000305" key="5"/>
<evidence type="ECO:0000312" key="6">
    <source>
        <dbReference type="HGNC" id="HGNC:32434"/>
    </source>
</evidence>
<feature type="chain" id="PRO_0000319593" description="Solute carrier family 38 member 8">
    <location>
        <begin position="1"/>
        <end position="435"/>
    </location>
</feature>
<feature type="transmembrane region" description="Helical" evidence="2">
    <location>
        <begin position="29"/>
        <end position="49"/>
    </location>
</feature>
<feature type="transmembrane region" description="Helical" evidence="2">
    <location>
        <begin position="55"/>
        <end position="75"/>
    </location>
</feature>
<feature type="transmembrane region" description="Helical" evidence="2">
    <location>
        <begin position="100"/>
        <end position="120"/>
    </location>
</feature>
<feature type="transmembrane region" description="Helical" evidence="2">
    <location>
        <begin position="151"/>
        <end position="171"/>
    </location>
</feature>
<feature type="transmembrane region" description="Helical" evidence="2">
    <location>
        <begin position="178"/>
        <end position="198"/>
    </location>
</feature>
<feature type="transmembrane region" description="Helical" evidence="2">
    <location>
        <begin position="218"/>
        <end position="240"/>
    </location>
</feature>
<feature type="transmembrane region" description="Helical" evidence="2">
    <location>
        <begin position="250"/>
        <end position="270"/>
    </location>
</feature>
<feature type="transmembrane region" description="Helical" evidence="2">
    <location>
        <begin position="295"/>
        <end position="315"/>
    </location>
</feature>
<feature type="transmembrane region" description="Helical" evidence="2">
    <location>
        <begin position="348"/>
        <end position="368"/>
    </location>
</feature>
<feature type="transmembrane region" description="Helical" evidence="2">
    <location>
        <begin position="374"/>
        <end position="394"/>
    </location>
</feature>
<feature type="transmembrane region" description="Helical" evidence="2">
    <location>
        <begin position="410"/>
        <end position="430"/>
    </location>
</feature>
<feature type="sequence variant" id="VAR_071252" description="In FVH2; dbSNP:rs587777253." evidence="3">
    <original>I</original>
    <variation>S</variation>
    <location>
        <position position="32"/>
    </location>
</feature>
<feature type="sequence variant" id="VAR_071253" description="In FVH2; dbSNP:rs2085373711." evidence="4">
    <original>M</original>
    <variation>R</variation>
    <location>
        <position position="34"/>
    </location>
</feature>
<feature type="sequence variant" id="VAR_048125" description="In dbSNP:rs11862366.">
    <original>S</original>
    <variation>T</variation>
    <location>
        <position position="220"/>
    </location>
</feature>
<feature type="sequence variant" id="VAR_071254" description="In FVH2; dbSNP:rs372929441." evidence="4">
    <original>E</original>
    <variation>K</variation>
    <location>
        <position position="233"/>
    </location>
</feature>
<feature type="sequence variant" id="VAR_071255" description="In FVH2; dbSNP:rs587777254." evidence="4">
    <original>V</original>
    <variation>D</variation>
    <location>
        <position position="236"/>
    </location>
</feature>
<feature type="sequence variant" id="VAR_071256" description="In FVH2." evidence="4">
    <location>
        <position position="282"/>
    </location>
</feature>
<feature type="sequence variant" id="VAR_071257" description="In FVH2; dbSNP:rs587777256." evidence="4">
    <original>G</original>
    <variation>R</variation>
    <location>
        <position position="412"/>
    </location>
</feature>
<proteinExistence type="evidence at protein level"/>
<dbReference type="EMBL" id="AC040169">
    <property type="status" value="NOT_ANNOTATED_CDS"/>
    <property type="molecule type" value="Genomic_DNA"/>
</dbReference>
<dbReference type="CCDS" id="CCDS32495.1"/>
<dbReference type="RefSeq" id="NP_001073911.1">
    <property type="nucleotide sequence ID" value="NM_001080442.3"/>
</dbReference>
<dbReference type="RefSeq" id="XP_016878435.1">
    <property type="nucleotide sequence ID" value="XM_017022946.1"/>
</dbReference>
<dbReference type="RefSeq" id="XP_054235604.1">
    <property type="nucleotide sequence ID" value="XM_054379629.1"/>
</dbReference>
<dbReference type="SMR" id="A6NNN8"/>
<dbReference type="FunCoup" id="A6NNN8">
    <property type="interactions" value="3"/>
</dbReference>
<dbReference type="IntAct" id="A6NNN8">
    <property type="interactions" value="1"/>
</dbReference>
<dbReference type="STRING" id="9606.ENSP00000299709"/>
<dbReference type="TCDB" id="2.A.18.6.12">
    <property type="family name" value="the amino acid/auxin permease (aaap) family"/>
</dbReference>
<dbReference type="iPTMnet" id="A6NNN8"/>
<dbReference type="PhosphoSitePlus" id="A6NNN8"/>
<dbReference type="BioMuta" id="SLC38A8"/>
<dbReference type="MassIVE" id="A6NNN8"/>
<dbReference type="PaxDb" id="9606-ENSP00000299709"/>
<dbReference type="PeptideAtlas" id="A6NNN8"/>
<dbReference type="Antibodypedia" id="67804">
    <property type="antibodies" value="68 antibodies from 14 providers"/>
</dbReference>
<dbReference type="DNASU" id="146167"/>
<dbReference type="Ensembl" id="ENST00000299709.8">
    <property type="protein sequence ID" value="ENSP00000299709.3"/>
    <property type="gene ID" value="ENSG00000166558.11"/>
</dbReference>
<dbReference type="GeneID" id="146167"/>
<dbReference type="KEGG" id="hsa:146167"/>
<dbReference type="MANE-Select" id="ENST00000299709.8">
    <property type="protein sequence ID" value="ENSP00000299709.3"/>
    <property type="RefSeq nucleotide sequence ID" value="NM_001080442.3"/>
    <property type="RefSeq protein sequence ID" value="NP_001073911.1"/>
</dbReference>
<dbReference type="UCSC" id="uc002fhg.1">
    <property type="organism name" value="human"/>
</dbReference>
<dbReference type="AGR" id="HGNC:32434"/>
<dbReference type="CTD" id="146167"/>
<dbReference type="DisGeNET" id="146167"/>
<dbReference type="GeneCards" id="SLC38A8"/>
<dbReference type="HGNC" id="HGNC:32434">
    <property type="gene designation" value="SLC38A8"/>
</dbReference>
<dbReference type="HPA" id="ENSG00000166558">
    <property type="expression patterns" value="Tissue enhanced (brain)"/>
</dbReference>
<dbReference type="MalaCards" id="SLC38A8"/>
<dbReference type="MIM" id="609218">
    <property type="type" value="phenotype"/>
</dbReference>
<dbReference type="MIM" id="615585">
    <property type="type" value="gene"/>
</dbReference>
<dbReference type="neXtProt" id="NX_A6NNN8"/>
<dbReference type="OpenTargets" id="ENSG00000166558"/>
<dbReference type="Orphanet" id="397618">
    <property type="disease" value="Foveal hypoplasia-optic nerve decussation defect-anterior segment dysgenesis syndrome"/>
</dbReference>
<dbReference type="PharmGKB" id="PA162403773"/>
<dbReference type="VEuPathDB" id="HostDB:ENSG00000166558"/>
<dbReference type="eggNOG" id="KOG1305">
    <property type="taxonomic scope" value="Eukaryota"/>
</dbReference>
<dbReference type="GeneTree" id="ENSGT00940000157764"/>
<dbReference type="HOGENOM" id="CLU_038973_0_0_1"/>
<dbReference type="InParanoid" id="A6NNN8"/>
<dbReference type="OMA" id="QDFWKRS"/>
<dbReference type="OrthoDB" id="438545at2759"/>
<dbReference type="PAN-GO" id="A6NNN8">
    <property type="GO annotations" value="2 GO annotations based on evolutionary models"/>
</dbReference>
<dbReference type="PhylomeDB" id="A6NNN8"/>
<dbReference type="TreeFam" id="TF328787"/>
<dbReference type="PathwayCommons" id="A6NNN8"/>
<dbReference type="SignaLink" id="A6NNN8"/>
<dbReference type="BioGRID-ORCS" id="146167">
    <property type="hits" value="14 hits in 1148 CRISPR screens"/>
</dbReference>
<dbReference type="GenomeRNAi" id="146167"/>
<dbReference type="Pharos" id="A6NNN8">
    <property type="development level" value="Tbio"/>
</dbReference>
<dbReference type="PRO" id="PR:A6NNN8"/>
<dbReference type="Proteomes" id="UP000005640">
    <property type="component" value="Chromosome 16"/>
</dbReference>
<dbReference type="RNAct" id="A6NNN8">
    <property type="molecule type" value="protein"/>
</dbReference>
<dbReference type="Bgee" id="ENSG00000166558">
    <property type="expression patterns" value="Expressed in male germ line stem cell (sensu Vertebrata) in testis and 58 other cell types or tissues"/>
</dbReference>
<dbReference type="ExpressionAtlas" id="A6NNN8">
    <property type="expression patterns" value="baseline and differential"/>
</dbReference>
<dbReference type="GO" id="GO:0030424">
    <property type="term" value="C:axon"/>
    <property type="evidence" value="ECO:0007669"/>
    <property type="project" value="UniProtKB-SubCell"/>
</dbReference>
<dbReference type="GO" id="GO:0005938">
    <property type="term" value="C:cell cortex"/>
    <property type="evidence" value="ECO:0007669"/>
    <property type="project" value="UniProtKB-SubCell"/>
</dbReference>
<dbReference type="GO" id="GO:0016020">
    <property type="term" value="C:membrane"/>
    <property type="evidence" value="ECO:0000318"/>
    <property type="project" value="GO_Central"/>
</dbReference>
<dbReference type="GO" id="GO:0015179">
    <property type="term" value="F:L-amino acid transmembrane transporter activity"/>
    <property type="evidence" value="ECO:0000318"/>
    <property type="project" value="GO_Central"/>
</dbReference>
<dbReference type="GO" id="GO:0003333">
    <property type="term" value="P:amino acid transmembrane transport"/>
    <property type="evidence" value="ECO:0000318"/>
    <property type="project" value="GO_Central"/>
</dbReference>
<dbReference type="GO" id="GO:0006531">
    <property type="term" value="P:aspartate metabolic process"/>
    <property type="evidence" value="ECO:0007669"/>
    <property type="project" value="Ensembl"/>
</dbReference>
<dbReference type="GO" id="GO:0031175">
    <property type="term" value="P:neuron projection development"/>
    <property type="evidence" value="ECO:0007669"/>
    <property type="project" value="Ensembl"/>
</dbReference>
<dbReference type="GO" id="GO:0021554">
    <property type="term" value="P:optic nerve development"/>
    <property type="evidence" value="ECO:0007669"/>
    <property type="project" value="Ensembl"/>
</dbReference>
<dbReference type="GO" id="GO:0009615">
    <property type="term" value="P:response to virus"/>
    <property type="evidence" value="ECO:0007669"/>
    <property type="project" value="Ensembl"/>
</dbReference>
<dbReference type="GO" id="GO:0003406">
    <property type="term" value="P:retinal pigment epithelium development"/>
    <property type="evidence" value="ECO:0007669"/>
    <property type="project" value="Ensembl"/>
</dbReference>
<dbReference type="GO" id="GO:0019079">
    <property type="term" value="P:viral genome replication"/>
    <property type="evidence" value="ECO:0007669"/>
    <property type="project" value="Ensembl"/>
</dbReference>
<dbReference type="GO" id="GO:0007601">
    <property type="term" value="P:visual perception"/>
    <property type="evidence" value="ECO:0007669"/>
    <property type="project" value="Ensembl"/>
</dbReference>
<dbReference type="FunFam" id="1.20.1740.10:FF:000038">
    <property type="entry name" value="Putative sodium-coupled neutral amino acid transporter 7"/>
    <property type="match status" value="1"/>
</dbReference>
<dbReference type="InterPro" id="IPR013057">
    <property type="entry name" value="AA_transpt_TM"/>
</dbReference>
<dbReference type="PANTHER" id="PTHR22950">
    <property type="entry name" value="AMINO ACID TRANSPORTER"/>
    <property type="match status" value="1"/>
</dbReference>
<dbReference type="PANTHER" id="PTHR22950:SF226">
    <property type="entry name" value="SODIUM-COUPLED NEUTRAL AMINO ACID TRANSPORTER 8-RELATED"/>
    <property type="match status" value="1"/>
</dbReference>
<dbReference type="Pfam" id="PF01490">
    <property type="entry name" value="Aa_trans"/>
    <property type="match status" value="1"/>
</dbReference>
<organism>
    <name type="scientific">Homo sapiens</name>
    <name type="common">Human</name>
    <dbReference type="NCBI Taxonomy" id="9606"/>
    <lineage>
        <taxon>Eukaryota</taxon>
        <taxon>Metazoa</taxon>
        <taxon>Chordata</taxon>
        <taxon>Craniata</taxon>
        <taxon>Vertebrata</taxon>
        <taxon>Euteleostomi</taxon>
        <taxon>Mammalia</taxon>
        <taxon>Eutheria</taxon>
        <taxon>Euarchontoglires</taxon>
        <taxon>Primates</taxon>
        <taxon>Haplorrhini</taxon>
        <taxon>Catarrhini</taxon>
        <taxon>Hominidae</taxon>
        <taxon>Homo</taxon>
    </lineage>
</organism>
<comment type="function">
    <text evidence="1">Electrogenic sodium-dependent amino acid transporter with a preference for L-glutamine, L-alanine, L-histidine, L-aspartate and L-arginine. May facilitate glutamine uptake in both excitatory and inhibitory neurons. The transport mechanism and stoichiometry remain to be elucidated.</text>
</comment>
<comment type="catalytic activity">
    <reaction evidence="1">
        <text>L-glutamine(out) = L-glutamine(in)</text>
        <dbReference type="Rhea" id="RHEA:73419"/>
        <dbReference type="ChEBI" id="CHEBI:58359"/>
    </reaction>
</comment>
<comment type="catalytic activity">
    <reaction evidence="1">
        <text>L-alanine(in) = L-alanine(out)</text>
        <dbReference type="Rhea" id="RHEA:70719"/>
        <dbReference type="ChEBI" id="CHEBI:57972"/>
    </reaction>
</comment>
<comment type="catalytic activity">
    <reaction evidence="1">
        <text>L-histidine(out) = L-histidine(in)</text>
        <dbReference type="Rhea" id="RHEA:72807"/>
        <dbReference type="ChEBI" id="CHEBI:57595"/>
    </reaction>
</comment>
<comment type="catalytic activity">
    <reaction evidence="1">
        <text>L-aspartate(out) = L-aspartate(in)</text>
        <dbReference type="Rhea" id="RHEA:66332"/>
        <dbReference type="ChEBI" id="CHEBI:29991"/>
    </reaction>
</comment>
<comment type="catalytic activity">
    <reaction evidence="1">
        <text>L-arginine(in) = L-arginine(out)</text>
        <dbReference type="Rhea" id="RHEA:32143"/>
        <dbReference type="ChEBI" id="CHEBI:32682"/>
    </reaction>
</comment>
<comment type="catalytic activity">
    <reaction evidence="1">
        <text>L-leucine(in) = L-leucine(out)</text>
        <dbReference type="Rhea" id="RHEA:73011"/>
        <dbReference type="ChEBI" id="CHEBI:57427"/>
    </reaction>
</comment>
<comment type="subcellular location">
    <subcellularLocation>
        <location evidence="1">Membrane</location>
        <topology evidence="2">Multi-pass membrane protein</topology>
    </subcellularLocation>
    <subcellularLocation>
        <location evidence="1">Cytoplasm</location>
        <location evidence="1">Cell cortex</location>
    </subcellularLocation>
    <subcellularLocation>
        <location evidence="1">Cell projection</location>
        <location evidence="1">Axon</location>
    </subcellularLocation>
</comment>
<comment type="tissue specificity">
    <text evidence="4">Expressed in fetal and adult brain, and spinal cord. In the brain, it is localized in the cell body and axon of the majority of neuronal cells and in a subset of glial cells. Found throughout the neuronal retina, with higher expression levels in the inner and outer plexiform layers and the photoreceptor layer. Very weak expression is also present in the kidneys, thymus, and testes.</text>
</comment>
<comment type="disease" evidence="3 4">
    <disease id="DI-04048">
        <name>Foveal hypoplasia 2</name>
        <acronym>FVH2</acronym>
        <description>An isolated form of foveal hypoplasia, a developmental defect of the eye defined as the lack of foveal depression with continuity of all neurosensory retinal layers in the presumed foveal area. Clinical features include absence of foveal pit on optical coherence tomography, absence of foveal hyperpigmentation, absence of foveal avascularity, absence of foveal and macular reflexes, decreased visual acuity, and nystagmus. Optic nerve misrouting and anterior segment dysgenesis are observed in some FVH2 patients.</description>
        <dbReference type="MIM" id="609218"/>
    </disease>
    <text>The disease is caused by variants affecting the gene represented in this entry.</text>
</comment>
<comment type="similarity">
    <text evidence="5">Belongs to the amino acid/polyamine transporter 2 family.</text>
</comment>
<sequence length="435" mass="46731">MEGQTPGSRGLPEKPHPATAAATLSSMGAVFILMKSALGAGLLNFPWAFSKAGGVVPAFLVELVSLVFLISGLVILGYAAAVSGQATYQGVVRGLCGPAIGKLCEACFLLNLLMISVAFLRVIGDQLEKLCDSLLSGTPPAPQPWYADQRFTLPLLSVLVILPLSAPREIAFQKYTSILGTLAACYLALVITVQYYLWPQGLVRESHPSLSPASWTSVFSVFPTICFGFQCHEAAVSIYCSMRKRSLSHWALVSVLSLLACCLIYSLTGVYGFLTFGTEVSADVLMSYPGNDMVIIVARVLFAVSIVTVYPIVLFLGRSVMQDFWRRSCLGGWGPSALADPSGLWVRMPLTILWVTVTLAMALFMPDLSEIVSIIGGISSFFIFIFPGLCLICAMGVEPIGPRVKCCLEVWGVVSVLVGTFIFGQSTAAAVWEMF</sequence>
<keyword id="KW-0029">Amino-acid transport</keyword>
<keyword id="KW-0966">Cell projection</keyword>
<keyword id="KW-0963">Cytoplasm</keyword>
<keyword id="KW-0225">Disease variant</keyword>
<keyword id="KW-0472">Membrane</keyword>
<keyword id="KW-1185">Reference proteome</keyword>
<keyword id="KW-0812">Transmembrane</keyword>
<keyword id="KW-1133">Transmembrane helix</keyword>
<keyword id="KW-0813">Transport</keyword>
<protein>
    <recommendedName>
        <fullName>Solute carrier family 38 member 8</fullName>
    </recommendedName>
    <alternativeName>
        <fullName evidence="1">Amino acid transporter SLC38A8</fullName>
    </alternativeName>
</protein>
<name>S38A8_HUMAN</name>
<reference key="1">
    <citation type="journal article" date="2004" name="Nature">
        <title>The sequence and analysis of duplication-rich human chromosome 16.</title>
        <authorList>
            <person name="Martin J."/>
            <person name="Han C."/>
            <person name="Gordon L.A."/>
            <person name="Terry A."/>
            <person name="Prabhakar S."/>
            <person name="She X."/>
            <person name="Xie G."/>
            <person name="Hellsten U."/>
            <person name="Chan Y.M."/>
            <person name="Altherr M."/>
            <person name="Couronne O."/>
            <person name="Aerts A."/>
            <person name="Bajorek E."/>
            <person name="Black S."/>
            <person name="Blumer H."/>
            <person name="Branscomb E."/>
            <person name="Brown N.C."/>
            <person name="Bruno W.J."/>
            <person name="Buckingham J.M."/>
            <person name="Callen D.F."/>
            <person name="Campbell C.S."/>
            <person name="Campbell M.L."/>
            <person name="Campbell E.W."/>
            <person name="Caoile C."/>
            <person name="Challacombe J.F."/>
            <person name="Chasteen L.A."/>
            <person name="Chertkov O."/>
            <person name="Chi H.C."/>
            <person name="Christensen M."/>
            <person name="Clark L.M."/>
            <person name="Cohn J.D."/>
            <person name="Denys M."/>
            <person name="Detter J.C."/>
            <person name="Dickson M."/>
            <person name="Dimitrijevic-Bussod M."/>
            <person name="Escobar J."/>
            <person name="Fawcett J.J."/>
            <person name="Flowers D."/>
            <person name="Fotopulos D."/>
            <person name="Glavina T."/>
            <person name="Gomez M."/>
            <person name="Gonzales E."/>
            <person name="Goodstein D."/>
            <person name="Goodwin L.A."/>
            <person name="Grady D.L."/>
            <person name="Grigoriev I."/>
            <person name="Groza M."/>
            <person name="Hammon N."/>
            <person name="Hawkins T."/>
            <person name="Haydu L."/>
            <person name="Hildebrand C.E."/>
            <person name="Huang W."/>
            <person name="Israni S."/>
            <person name="Jett J."/>
            <person name="Jewett P.B."/>
            <person name="Kadner K."/>
            <person name="Kimball H."/>
            <person name="Kobayashi A."/>
            <person name="Krawczyk M.-C."/>
            <person name="Leyba T."/>
            <person name="Longmire J.L."/>
            <person name="Lopez F."/>
            <person name="Lou Y."/>
            <person name="Lowry S."/>
            <person name="Ludeman T."/>
            <person name="Manohar C.F."/>
            <person name="Mark G.A."/>
            <person name="McMurray K.L."/>
            <person name="Meincke L.J."/>
            <person name="Morgan J."/>
            <person name="Moyzis R.K."/>
            <person name="Mundt M.O."/>
            <person name="Munk A.C."/>
            <person name="Nandkeshwar R.D."/>
            <person name="Pitluck S."/>
            <person name="Pollard M."/>
            <person name="Predki P."/>
            <person name="Parson-Quintana B."/>
            <person name="Ramirez L."/>
            <person name="Rash S."/>
            <person name="Retterer J."/>
            <person name="Ricke D.O."/>
            <person name="Robinson D.L."/>
            <person name="Rodriguez A."/>
            <person name="Salamov A."/>
            <person name="Saunders E.H."/>
            <person name="Scott D."/>
            <person name="Shough T."/>
            <person name="Stallings R.L."/>
            <person name="Stalvey M."/>
            <person name="Sutherland R.D."/>
            <person name="Tapia R."/>
            <person name="Tesmer J.G."/>
            <person name="Thayer N."/>
            <person name="Thompson L.S."/>
            <person name="Tice H."/>
            <person name="Torney D.C."/>
            <person name="Tran-Gyamfi M."/>
            <person name="Tsai M."/>
            <person name="Ulanovsky L.E."/>
            <person name="Ustaszewska A."/>
            <person name="Vo N."/>
            <person name="White P.S."/>
            <person name="Williams A.L."/>
            <person name="Wills P.L."/>
            <person name="Wu J.-R."/>
            <person name="Wu K."/>
            <person name="Yang J."/>
            <person name="DeJong P."/>
            <person name="Bruce D."/>
            <person name="Doggett N.A."/>
            <person name="Deaven L."/>
            <person name="Schmutz J."/>
            <person name="Grimwood J."/>
            <person name="Richardson P."/>
            <person name="Rokhsar D.S."/>
            <person name="Eichler E.E."/>
            <person name="Gilna P."/>
            <person name="Lucas S.M."/>
            <person name="Myers R.M."/>
            <person name="Rubin E.M."/>
            <person name="Pennacchio L.A."/>
        </authorList>
    </citation>
    <scope>NUCLEOTIDE SEQUENCE [LARGE SCALE GENOMIC DNA]</scope>
</reference>
<reference key="2">
    <citation type="journal article" date="2013" name="Am. J. Hum. Genet.">
        <title>Recessive mutations in SLC38A8 cause foveal hypoplasia and optic nerve misrouting without albinism.</title>
        <authorList>
            <person name="Poulter J.A."/>
            <person name="Al-Araimi M."/>
            <person name="Conte I."/>
            <person name="van Genderen M.M."/>
            <person name="Sheridan E."/>
            <person name="Carr I.M."/>
            <person name="Parry D.A."/>
            <person name="Shires M."/>
            <person name="Carrella S."/>
            <person name="Bradbury J."/>
            <person name="Khan K."/>
            <person name="Lakeman P."/>
            <person name="Sergouniotis P.I."/>
            <person name="Webster A.R."/>
            <person name="Moore A.T."/>
            <person name="Pal B."/>
            <person name="Mohamed M.D."/>
            <person name="Venkataramana A."/>
            <person name="Ramprasad V."/>
            <person name="Shetty R."/>
            <person name="Saktivel M."/>
            <person name="Kumaramanickavel G."/>
            <person name="Tan A."/>
            <person name="Mackey D.A."/>
            <person name="Hewitt A.W."/>
            <person name="Banfi S."/>
            <person name="Ali M."/>
            <person name="Inglehearn C.F."/>
            <person name="Toomes C."/>
        </authorList>
    </citation>
    <scope>TISSUE SPECIFICITY</scope>
    <scope>VARIANTS FVH2 ARG-34; LYS-233; ASP-236; ALA-282 DEL AND ARG-412</scope>
</reference>
<reference key="3">
    <citation type="journal article" date="2014" name="Eur. J. Hum. Genet.">
        <title>Isolated foveal hypoplasia with secondary nystagmus and low vision is associated with a homozygous SLC38A8 mutation.</title>
        <authorList>
            <person name="Perez Y."/>
            <person name="Gradstein L."/>
            <person name="Flusser H."/>
            <person name="Markus B."/>
            <person name="Cohen I."/>
            <person name="Langer Y."/>
            <person name="Marcus M."/>
            <person name="Lifshitz T."/>
            <person name="Kadir R."/>
            <person name="Birk O.S."/>
        </authorList>
    </citation>
    <scope>VARIANT FVH2 SER-32</scope>
</reference>